<comment type="function">
    <text evidence="1">Involved in peptide bond synthesis. Stimulates efficient translation and peptide-bond synthesis on native or reconstituted 70S ribosomes in vitro. Probably functions indirectly by altering the affinity of the ribosome for aminoacyl-tRNA, thus increasing their reactivity as acceptors for peptidyl transferase.</text>
</comment>
<comment type="pathway">
    <text evidence="1">Protein biosynthesis; polypeptide chain elongation.</text>
</comment>
<comment type="subcellular location">
    <subcellularLocation>
        <location evidence="1">Cytoplasm</location>
    </subcellularLocation>
</comment>
<comment type="similarity">
    <text evidence="1">Belongs to the elongation factor P family.</text>
</comment>
<organism>
    <name type="scientific">Cyanothece sp. (strain PCC 7425 / ATCC 29141)</name>
    <dbReference type="NCBI Taxonomy" id="395961"/>
    <lineage>
        <taxon>Bacteria</taxon>
        <taxon>Bacillati</taxon>
        <taxon>Cyanobacteriota</taxon>
        <taxon>Cyanophyceae</taxon>
        <taxon>Gomontiellales</taxon>
        <taxon>Cyanothecaceae</taxon>
        <taxon>Cyanothece</taxon>
    </lineage>
</organism>
<name>EFP_CYAP4</name>
<accession>B8HV20</accession>
<protein>
    <recommendedName>
        <fullName evidence="1">Elongation factor P</fullName>
        <shortName evidence="1">EF-P</shortName>
    </recommendedName>
</protein>
<gene>
    <name evidence="1" type="primary">efp</name>
    <name type="ordered locus">Cyan7425_0679</name>
</gene>
<proteinExistence type="inferred from homology"/>
<keyword id="KW-0963">Cytoplasm</keyword>
<keyword id="KW-0251">Elongation factor</keyword>
<keyword id="KW-0648">Protein biosynthesis</keyword>
<reference key="1">
    <citation type="journal article" date="2011" name="MBio">
        <title>Novel metabolic attributes of the genus Cyanothece, comprising a group of unicellular nitrogen-fixing Cyanobacteria.</title>
        <authorList>
            <person name="Bandyopadhyay A."/>
            <person name="Elvitigala T."/>
            <person name="Welsh E."/>
            <person name="Stockel J."/>
            <person name="Liberton M."/>
            <person name="Min H."/>
            <person name="Sherman L.A."/>
            <person name="Pakrasi H.B."/>
        </authorList>
    </citation>
    <scope>NUCLEOTIDE SEQUENCE [LARGE SCALE GENOMIC DNA]</scope>
    <source>
        <strain>PCC 7425 / ATCC 29141</strain>
    </source>
</reference>
<dbReference type="EMBL" id="CP001344">
    <property type="protein sequence ID" value="ACL43067.1"/>
    <property type="molecule type" value="Genomic_DNA"/>
</dbReference>
<dbReference type="SMR" id="B8HV20"/>
<dbReference type="STRING" id="395961.Cyan7425_0679"/>
<dbReference type="KEGG" id="cyn:Cyan7425_0679"/>
<dbReference type="eggNOG" id="COG0231">
    <property type="taxonomic scope" value="Bacteria"/>
</dbReference>
<dbReference type="HOGENOM" id="CLU_074944_0_1_3"/>
<dbReference type="OrthoDB" id="9801844at2"/>
<dbReference type="UniPathway" id="UPA00345"/>
<dbReference type="GO" id="GO:0005737">
    <property type="term" value="C:cytoplasm"/>
    <property type="evidence" value="ECO:0007669"/>
    <property type="project" value="UniProtKB-SubCell"/>
</dbReference>
<dbReference type="GO" id="GO:0003746">
    <property type="term" value="F:translation elongation factor activity"/>
    <property type="evidence" value="ECO:0007669"/>
    <property type="project" value="UniProtKB-UniRule"/>
</dbReference>
<dbReference type="GO" id="GO:0043043">
    <property type="term" value="P:peptide biosynthetic process"/>
    <property type="evidence" value="ECO:0007669"/>
    <property type="project" value="InterPro"/>
</dbReference>
<dbReference type="CDD" id="cd04470">
    <property type="entry name" value="S1_EF-P_repeat_1"/>
    <property type="match status" value="1"/>
</dbReference>
<dbReference type="CDD" id="cd05794">
    <property type="entry name" value="S1_EF-P_repeat_2"/>
    <property type="match status" value="1"/>
</dbReference>
<dbReference type="FunFam" id="2.30.30.30:FF:000003">
    <property type="entry name" value="Elongation factor P"/>
    <property type="match status" value="1"/>
</dbReference>
<dbReference type="FunFam" id="2.40.50.140:FF:000004">
    <property type="entry name" value="Elongation factor P"/>
    <property type="match status" value="1"/>
</dbReference>
<dbReference type="FunFam" id="2.40.50.140:FF:000009">
    <property type="entry name" value="Elongation factor P"/>
    <property type="match status" value="1"/>
</dbReference>
<dbReference type="Gene3D" id="2.30.30.30">
    <property type="match status" value="1"/>
</dbReference>
<dbReference type="Gene3D" id="2.40.50.140">
    <property type="entry name" value="Nucleic acid-binding proteins"/>
    <property type="match status" value="2"/>
</dbReference>
<dbReference type="HAMAP" id="MF_00141">
    <property type="entry name" value="EF_P"/>
    <property type="match status" value="1"/>
</dbReference>
<dbReference type="InterPro" id="IPR015365">
    <property type="entry name" value="Elong-fact-P_C"/>
</dbReference>
<dbReference type="InterPro" id="IPR012340">
    <property type="entry name" value="NA-bd_OB-fold"/>
</dbReference>
<dbReference type="InterPro" id="IPR014722">
    <property type="entry name" value="Rib_uL2_dom2"/>
</dbReference>
<dbReference type="InterPro" id="IPR020599">
    <property type="entry name" value="Transl_elong_fac_P/YeiP"/>
</dbReference>
<dbReference type="InterPro" id="IPR013185">
    <property type="entry name" value="Transl_elong_KOW-like"/>
</dbReference>
<dbReference type="InterPro" id="IPR001059">
    <property type="entry name" value="Transl_elong_P/YeiP_cen"/>
</dbReference>
<dbReference type="InterPro" id="IPR013852">
    <property type="entry name" value="Transl_elong_P/YeiP_CS"/>
</dbReference>
<dbReference type="InterPro" id="IPR011768">
    <property type="entry name" value="Transl_elongation_fac_P"/>
</dbReference>
<dbReference type="InterPro" id="IPR008991">
    <property type="entry name" value="Translation_prot_SH3-like_sf"/>
</dbReference>
<dbReference type="NCBIfam" id="TIGR00038">
    <property type="entry name" value="efp"/>
    <property type="match status" value="1"/>
</dbReference>
<dbReference type="NCBIfam" id="NF001810">
    <property type="entry name" value="PRK00529.1"/>
    <property type="match status" value="1"/>
</dbReference>
<dbReference type="PANTHER" id="PTHR30053">
    <property type="entry name" value="ELONGATION FACTOR P"/>
    <property type="match status" value="1"/>
</dbReference>
<dbReference type="PANTHER" id="PTHR30053:SF12">
    <property type="entry name" value="ELONGATION FACTOR P (EF-P) FAMILY PROTEIN"/>
    <property type="match status" value="1"/>
</dbReference>
<dbReference type="Pfam" id="PF01132">
    <property type="entry name" value="EFP"/>
    <property type="match status" value="1"/>
</dbReference>
<dbReference type="Pfam" id="PF08207">
    <property type="entry name" value="EFP_N"/>
    <property type="match status" value="1"/>
</dbReference>
<dbReference type="Pfam" id="PF09285">
    <property type="entry name" value="Elong-fact-P_C"/>
    <property type="match status" value="1"/>
</dbReference>
<dbReference type="PIRSF" id="PIRSF005901">
    <property type="entry name" value="EF-P"/>
    <property type="match status" value="1"/>
</dbReference>
<dbReference type="SMART" id="SM01185">
    <property type="entry name" value="EFP"/>
    <property type="match status" value="1"/>
</dbReference>
<dbReference type="SMART" id="SM00841">
    <property type="entry name" value="Elong-fact-P_C"/>
    <property type="match status" value="1"/>
</dbReference>
<dbReference type="SUPFAM" id="SSF50249">
    <property type="entry name" value="Nucleic acid-binding proteins"/>
    <property type="match status" value="2"/>
</dbReference>
<dbReference type="SUPFAM" id="SSF50104">
    <property type="entry name" value="Translation proteins SH3-like domain"/>
    <property type="match status" value="1"/>
</dbReference>
<dbReference type="PROSITE" id="PS01275">
    <property type="entry name" value="EFP"/>
    <property type="match status" value="1"/>
</dbReference>
<evidence type="ECO:0000255" key="1">
    <source>
        <dbReference type="HAMAP-Rule" id="MF_00141"/>
    </source>
</evidence>
<sequence>MISSNDFRPGVSIEWNNGVWRVVEFLHVKPGKGSAFVRTKLKNVQNGNVVEQTFRAGEMVPQANLEKSLMQHTYKEGDQYVFMDMETYEEARLTAAQIGDRVKYLKEGMEASVIRWGEQVMEVELPNSVVLEVVQTDPGVKGDTATGGTKPAIVETGAQVMVPLFITVGERIKIDTRNDSYLGRE</sequence>
<feature type="chain" id="PRO_1000123004" description="Elongation factor P">
    <location>
        <begin position="1"/>
        <end position="185"/>
    </location>
</feature>